<gene>
    <name evidence="1" type="primary">purC</name>
    <name type="ordered locus">RPR_01790</name>
</gene>
<keyword id="KW-0067">ATP-binding</keyword>
<keyword id="KW-0436">Ligase</keyword>
<keyword id="KW-0547">Nucleotide-binding</keyword>
<keyword id="KW-0658">Purine biosynthesis</keyword>
<evidence type="ECO:0000255" key="1">
    <source>
        <dbReference type="HAMAP-Rule" id="MF_00137"/>
    </source>
</evidence>
<proteinExistence type="inferred from homology"/>
<protein>
    <recommendedName>
        <fullName evidence="1">Phosphoribosylaminoimidazole-succinocarboxamide synthase</fullName>
        <ecNumber evidence="1">6.3.2.6</ecNumber>
    </recommendedName>
    <alternativeName>
        <fullName evidence="1">SAICAR synthetase</fullName>
    </alternativeName>
</protein>
<sequence>MKKKLYEGSSKILYSAEEDFLLIMAFSDKAILETGEIVDISGKGVLNNNISSFLMDKLEMIGIENHFIEKINMREQLIQYVEVFPIQVIISSVACSRFVKEFGIDEGYVFDKPIIDFKVRSREFKYPIVNEYQILNFGWLTRDEIKAVKEQALRIYDFLSGLFIGVGIRLVECKLEFGRVFNGEESIIMLTDEISPDNCRLWHINSNEKLGFELLEKEPNKVFESYQLIADRLKEK</sequence>
<feature type="chain" id="PRO_1000203240" description="Phosphoribosylaminoimidazole-succinocarboxamide synthase">
    <location>
        <begin position="1"/>
        <end position="236"/>
    </location>
</feature>
<accession>C4K0X5</accession>
<name>PUR7_RICPU</name>
<organism>
    <name type="scientific">Rickettsia peacockii (strain Rustic)</name>
    <dbReference type="NCBI Taxonomy" id="562019"/>
    <lineage>
        <taxon>Bacteria</taxon>
        <taxon>Pseudomonadati</taxon>
        <taxon>Pseudomonadota</taxon>
        <taxon>Alphaproteobacteria</taxon>
        <taxon>Rickettsiales</taxon>
        <taxon>Rickettsiaceae</taxon>
        <taxon>Rickettsieae</taxon>
        <taxon>Rickettsia</taxon>
        <taxon>spotted fever group</taxon>
    </lineage>
</organism>
<reference key="1">
    <citation type="journal article" date="2009" name="PLoS ONE">
        <title>Genome sequence of the endosymbiont Rickettsia peacockii and comparison with virulent Rickettsia rickettsii: identification of virulence factors.</title>
        <authorList>
            <person name="Felsheim R.F."/>
            <person name="Kurtti T.J."/>
            <person name="Munderloh U.G."/>
        </authorList>
    </citation>
    <scope>NUCLEOTIDE SEQUENCE [LARGE SCALE GENOMIC DNA]</scope>
    <source>
        <strain>Rustic</strain>
    </source>
</reference>
<comment type="catalytic activity">
    <reaction evidence="1">
        <text>5-amino-1-(5-phospho-D-ribosyl)imidazole-4-carboxylate + L-aspartate + ATP = (2S)-2-[5-amino-1-(5-phospho-beta-D-ribosyl)imidazole-4-carboxamido]succinate + ADP + phosphate + 2 H(+)</text>
        <dbReference type="Rhea" id="RHEA:22628"/>
        <dbReference type="ChEBI" id="CHEBI:15378"/>
        <dbReference type="ChEBI" id="CHEBI:29991"/>
        <dbReference type="ChEBI" id="CHEBI:30616"/>
        <dbReference type="ChEBI" id="CHEBI:43474"/>
        <dbReference type="ChEBI" id="CHEBI:58443"/>
        <dbReference type="ChEBI" id="CHEBI:77657"/>
        <dbReference type="ChEBI" id="CHEBI:456216"/>
        <dbReference type="EC" id="6.3.2.6"/>
    </reaction>
</comment>
<comment type="pathway">
    <text evidence="1">Purine metabolism; IMP biosynthesis via de novo pathway; 5-amino-1-(5-phospho-D-ribosyl)imidazole-4-carboxamide from 5-amino-1-(5-phospho-D-ribosyl)imidazole-4-carboxylate: step 1/2.</text>
</comment>
<comment type="similarity">
    <text evidence="1">Belongs to the SAICAR synthetase family.</text>
</comment>
<dbReference type="EC" id="6.3.2.6" evidence="1"/>
<dbReference type="EMBL" id="CP001227">
    <property type="protein sequence ID" value="ACR47226.1"/>
    <property type="molecule type" value="Genomic_DNA"/>
</dbReference>
<dbReference type="RefSeq" id="WP_004996420.1">
    <property type="nucleotide sequence ID" value="NC_012730.1"/>
</dbReference>
<dbReference type="SMR" id="C4K0X5"/>
<dbReference type="KEGG" id="rpk:RPR_01790"/>
<dbReference type="HOGENOM" id="CLU_061495_2_0_5"/>
<dbReference type="UniPathway" id="UPA00074">
    <property type="reaction ID" value="UER00131"/>
</dbReference>
<dbReference type="Proteomes" id="UP000005015">
    <property type="component" value="Chromosome"/>
</dbReference>
<dbReference type="GO" id="GO:0005829">
    <property type="term" value="C:cytosol"/>
    <property type="evidence" value="ECO:0007669"/>
    <property type="project" value="TreeGrafter"/>
</dbReference>
<dbReference type="GO" id="GO:0005524">
    <property type="term" value="F:ATP binding"/>
    <property type="evidence" value="ECO:0007669"/>
    <property type="project" value="UniProtKB-KW"/>
</dbReference>
<dbReference type="GO" id="GO:0004639">
    <property type="term" value="F:phosphoribosylaminoimidazolesuccinocarboxamide synthase activity"/>
    <property type="evidence" value="ECO:0007669"/>
    <property type="project" value="UniProtKB-UniRule"/>
</dbReference>
<dbReference type="GO" id="GO:0006189">
    <property type="term" value="P:'de novo' IMP biosynthetic process"/>
    <property type="evidence" value="ECO:0007669"/>
    <property type="project" value="UniProtKB-UniRule"/>
</dbReference>
<dbReference type="GO" id="GO:0009236">
    <property type="term" value="P:cobalamin biosynthetic process"/>
    <property type="evidence" value="ECO:0007669"/>
    <property type="project" value="InterPro"/>
</dbReference>
<dbReference type="CDD" id="cd01415">
    <property type="entry name" value="SAICAR_synt_PurC"/>
    <property type="match status" value="1"/>
</dbReference>
<dbReference type="Gene3D" id="3.30.470.20">
    <property type="entry name" value="ATP-grasp fold, B domain"/>
    <property type="match status" value="1"/>
</dbReference>
<dbReference type="Gene3D" id="3.30.200.20">
    <property type="entry name" value="Phosphorylase Kinase, domain 1"/>
    <property type="match status" value="1"/>
</dbReference>
<dbReference type="HAMAP" id="MF_00137">
    <property type="entry name" value="SAICAR_synth"/>
    <property type="match status" value="1"/>
</dbReference>
<dbReference type="InterPro" id="IPR028923">
    <property type="entry name" value="SAICAR_synt/ADE2_N"/>
</dbReference>
<dbReference type="InterPro" id="IPR033934">
    <property type="entry name" value="SAICAR_synt_PurC"/>
</dbReference>
<dbReference type="InterPro" id="IPR050089">
    <property type="entry name" value="SAICAR_synthetase"/>
</dbReference>
<dbReference type="PANTHER" id="PTHR43599">
    <property type="entry name" value="MULTIFUNCTIONAL PROTEIN ADE2"/>
    <property type="match status" value="1"/>
</dbReference>
<dbReference type="PANTHER" id="PTHR43599:SF3">
    <property type="entry name" value="SI:DKEY-6E2.2"/>
    <property type="match status" value="1"/>
</dbReference>
<dbReference type="Pfam" id="PF01259">
    <property type="entry name" value="SAICAR_synt"/>
    <property type="match status" value="1"/>
</dbReference>
<dbReference type="SUPFAM" id="SSF56104">
    <property type="entry name" value="SAICAR synthase-like"/>
    <property type="match status" value="1"/>
</dbReference>